<comment type="function">
    <text evidence="1">Catalyzes the first step in hexosamine metabolism, converting fructose-6P into glucosamine-6P using glutamine as a nitrogen source.</text>
</comment>
<comment type="catalytic activity">
    <reaction evidence="1">
        <text>D-fructose 6-phosphate + L-glutamine = D-glucosamine 6-phosphate + L-glutamate</text>
        <dbReference type="Rhea" id="RHEA:13237"/>
        <dbReference type="ChEBI" id="CHEBI:29985"/>
        <dbReference type="ChEBI" id="CHEBI:58359"/>
        <dbReference type="ChEBI" id="CHEBI:58725"/>
        <dbReference type="ChEBI" id="CHEBI:61527"/>
        <dbReference type="EC" id="2.6.1.16"/>
    </reaction>
</comment>
<comment type="subunit">
    <text evidence="1">Homodimer.</text>
</comment>
<comment type="subcellular location">
    <subcellularLocation>
        <location evidence="1">Cytoplasm</location>
    </subcellularLocation>
</comment>
<gene>
    <name evidence="1" type="primary">glmS</name>
    <name type="ordered locus">BruAb2_0642</name>
</gene>
<accession>Q577Y1</accession>
<sequence length="607" mass="66288">MCGIIGIIGNDEVAPRLVDALKRLEYRGYDSAGIATLQNGRLDRRRAEGKLVNLEKRLAGEPLPGVIGIGHTRWATHGRPVEHNAHPHITTRLAVVHNGIIENFAELRAMLEAEGRKFETETDTEAVAHLVTRELEKGKSPVEAVRDCLPHLKGAFALAFLFEGDEELLIGARQGPPLAVGYGEGEMFLGSDAIALAPFTDTISYLEDGDWAVLTRNGVSIYDENNKPVERPVQKSQNTNMLVSKGNHRHFMQKEMFEQPEVISHTLANYLDFTTGKVRKEAIGIDFSKVDRLTITACGTAYYAATVAKYWFEQIARLPVDSDIASEFRYREMPLSKDSLAMFVSQSGETADTLASLRYCKAQGLKIASVVNVTGSTIARESDAVFPTLAGPEIGVASTKAFTCQLSAMASLAIAAARARGAIDEVREQELVHQLSEAPRFINQVLKLEDQIAAVCHDLSKVNHVLYLGRGTSFPLAMEGALKLKEISYIHAEGYAAGELKHGPIALIDETMPVIVIAPSDRLYEKTVSNMQEVAARGGRIILITDKKGAESASIDTMATIVLPEVPEFISPLVYALPIQMLAYHTAVLMGTDVDQPRNLAKSVTVE</sequence>
<evidence type="ECO:0000255" key="1">
    <source>
        <dbReference type="HAMAP-Rule" id="MF_00164"/>
    </source>
</evidence>
<feature type="initiator methionine" description="Removed" evidence="1">
    <location>
        <position position="1"/>
    </location>
</feature>
<feature type="chain" id="PRO_0000135308" description="Glutamine--fructose-6-phosphate aminotransferase [isomerizing]">
    <location>
        <begin position="2"/>
        <end position="607"/>
    </location>
</feature>
<feature type="domain" description="Glutamine amidotransferase type-2" evidence="1">
    <location>
        <begin position="2"/>
        <end position="217"/>
    </location>
</feature>
<feature type="domain" description="SIS 1" evidence="1">
    <location>
        <begin position="283"/>
        <end position="422"/>
    </location>
</feature>
<feature type="domain" description="SIS 2" evidence="1">
    <location>
        <begin position="455"/>
        <end position="597"/>
    </location>
</feature>
<feature type="active site" description="Nucleophile; for GATase activity" evidence="1">
    <location>
        <position position="2"/>
    </location>
</feature>
<feature type="active site" description="For Fru-6P isomerization activity" evidence="1">
    <location>
        <position position="602"/>
    </location>
</feature>
<name>GLMS_BRUAB</name>
<reference key="1">
    <citation type="journal article" date="2005" name="J. Bacteriol.">
        <title>Completion of the genome sequence of Brucella abortus and comparison to the highly similar genomes of Brucella melitensis and Brucella suis.</title>
        <authorList>
            <person name="Halling S.M."/>
            <person name="Peterson-Burch B.D."/>
            <person name="Bricker B.J."/>
            <person name="Zuerner R.L."/>
            <person name="Qing Z."/>
            <person name="Li L.-L."/>
            <person name="Kapur V."/>
            <person name="Alt D.P."/>
            <person name="Olsen S.C."/>
        </authorList>
    </citation>
    <scope>NUCLEOTIDE SEQUENCE [LARGE SCALE GENOMIC DNA]</scope>
    <source>
        <strain>9-941</strain>
    </source>
</reference>
<organism>
    <name type="scientific">Brucella abortus biovar 1 (strain 9-941)</name>
    <dbReference type="NCBI Taxonomy" id="262698"/>
    <lineage>
        <taxon>Bacteria</taxon>
        <taxon>Pseudomonadati</taxon>
        <taxon>Pseudomonadota</taxon>
        <taxon>Alphaproteobacteria</taxon>
        <taxon>Hyphomicrobiales</taxon>
        <taxon>Brucellaceae</taxon>
        <taxon>Brucella/Ochrobactrum group</taxon>
        <taxon>Brucella</taxon>
    </lineage>
</organism>
<keyword id="KW-0032">Aminotransferase</keyword>
<keyword id="KW-0963">Cytoplasm</keyword>
<keyword id="KW-0315">Glutamine amidotransferase</keyword>
<keyword id="KW-0677">Repeat</keyword>
<keyword id="KW-0808">Transferase</keyword>
<protein>
    <recommendedName>
        <fullName evidence="1">Glutamine--fructose-6-phosphate aminotransferase [isomerizing]</fullName>
        <ecNumber evidence="1">2.6.1.16</ecNumber>
    </recommendedName>
    <alternativeName>
        <fullName evidence="1">D-fructose-6-phosphate amidotransferase</fullName>
    </alternativeName>
    <alternativeName>
        <fullName evidence="1">GFAT</fullName>
    </alternativeName>
    <alternativeName>
        <fullName evidence="1">Glucosamine-6-phosphate synthase</fullName>
    </alternativeName>
    <alternativeName>
        <fullName evidence="1">Hexosephosphate aminotransferase</fullName>
    </alternativeName>
    <alternativeName>
        <fullName evidence="1">L-glutamine--D-fructose-6-phosphate amidotransferase</fullName>
    </alternativeName>
</protein>
<dbReference type="EC" id="2.6.1.16" evidence="1"/>
<dbReference type="EMBL" id="AE017224">
    <property type="protein sequence ID" value="AAX76053.1"/>
    <property type="molecule type" value="Genomic_DNA"/>
</dbReference>
<dbReference type="RefSeq" id="WP_002967298.1">
    <property type="nucleotide sequence ID" value="NC_006933.1"/>
</dbReference>
<dbReference type="SMR" id="Q577Y1"/>
<dbReference type="EnsemblBacteria" id="AAX76053">
    <property type="protein sequence ID" value="AAX76053"/>
    <property type="gene ID" value="BruAb2_0642"/>
</dbReference>
<dbReference type="GeneID" id="93015455"/>
<dbReference type="KEGG" id="bmb:BruAb2_0642"/>
<dbReference type="HOGENOM" id="CLU_012520_5_2_5"/>
<dbReference type="Proteomes" id="UP000000540">
    <property type="component" value="Chromosome II"/>
</dbReference>
<dbReference type="GO" id="GO:0005829">
    <property type="term" value="C:cytosol"/>
    <property type="evidence" value="ECO:0007669"/>
    <property type="project" value="TreeGrafter"/>
</dbReference>
<dbReference type="GO" id="GO:0097367">
    <property type="term" value="F:carbohydrate derivative binding"/>
    <property type="evidence" value="ECO:0007669"/>
    <property type="project" value="InterPro"/>
</dbReference>
<dbReference type="GO" id="GO:0004360">
    <property type="term" value="F:glutamine-fructose-6-phosphate transaminase (isomerizing) activity"/>
    <property type="evidence" value="ECO:0007669"/>
    <property type="project" value="UniProtKB-UniRule"/>
</dbReference>
<dbReference type="GO" id="GO:0005975">
    <property type="term" value="P:carbohydrate metabolic process"/>
    <property type="evidence" value="ECO:0007669"/>
    <property type="project" value="UniProtKB-UniRule"/>
</dbReference>
<dbReference type="GO" id="GO:0006002">
    <property type="term" value="P:fructose 6-phosphate metabolic process"/>
    <property type="evidence" value="ECO:0007669"/>
    <property type="project" value="TreeGrafter"/>
</dbReference>
<dbReference type="GO" id="GO:0006487">
    <property type="term" value="P:protein N-linked glycosylation"/>
    <property type="evidence" value="ECO:0007669"/>
    <property type="project" value="TreeGrafter"/>
</dbReference>
<dbReference type="GO" id="GO:0006047">
    <property type="term" value="P:UDP-N-acetylglucosamine metabolic process"/>
    <property type="evidence" value="ECO:0007669"/>
    <property type="project" value="TreeGrafter"/>
</dbReference>
<dbReference type="CDD" id="cd00714">
    <property type="entry name" value="GFAT"/>
    <property type="match status" value="1"/>
</dbReference>
<dbReference type="CDD" id="cd05008">
    <property type="entry name" value="SIS_GlmS_GlmD_1"/>
    <property type="match status" value="1"/>
</dbReference>
<dbReference type="CDD" id="cd05009">
    <property type="entry name" value="SIS_GlmS_GlmD_2"/>
    <property type="match status" value="1"/>
</dbReference>
<dbReference type="FunFam" id="3.40.50.10490:FF:000001">
    <property type="entry name" value="Glutamine--fructose-6-phosphate aminotransferase [isomerizing]"/>
    <property type="match status" value="1"/>
</dbReference>
<dbReference type="FunFam" id="3.40.50.10490:FF:000002">
    <property type="entry name" value="Glutamine--fructose-6-phosphate aminotransferase [isomerizing]"/>
    <property type="match status" value="1"/>
</dbReference>
<dbReference type="FunFam" id="3.60.20.10:FF:000006">
    <property type="entry name" value="Glutamine--fructose-6-phosphate aminotransferase [isomerizing]"/>
    <property type="match status" value="1"/>
</dbReference>
<dbReference type="Gene3D" id="3.40.50.10490">
    <property type="entry name" value="Glucose-6-phosphate isomerase like protein, domain 1"/>
    <property type="match status" value="2"/>
</dbReference>
<dbReference type="Gene3D" id="3.60.20.10">
    <property type="entry name" value="Glutamine Phosphoribosylpyrophosphate, subunit 1, domain 1"/>
    <property type="match status" value="1"/>
</dbReference>
<dbReference type="HAMAP" id="MF_00164">
    <property type="entry name" value="GlmS"/>
    <property type="match status" value="1"/>
</dbReference>
<dbReference type="InterPro" id="IPR017932">
    <property type="entry name" value="GATase_2_dom"/>
</dbReference>
<dbReference type="InterPro" id="IPR005855">
    <property type="entry name" value="GFAT"/>
</dbReference>
<dbReference type="InterPro" id="IPR047084">
    <property type="entry name" value="GFAT_N"/>
</dbReference>
<dbReference type="InterPro" id="IPR035466">
    <property type="entry name" value="GlmS/AgaS_SIS"/>
</dbReference>
<dbReference type="InterPro" id="IPR035490">
    <property type="entry name" value="GlmS/FrlB_SIS"/>
</dbReference>
<dbReference type="InterPro" id="IPR029055">
    <property type="entry name" value="Ntn_hydrolases_N"/>
</dbReference>
<dbReference type="InterPro" id="IPR001347">
    <property type="entry name" value="SIS_dom"/>
</dbReference>
<dbReference type="InterPro" id="IPR046348">
    <property type="entry name" value="SIS_dom_sf"/>
</dbReference>
<dbReference type="NCBIfam" id="TIGR01135">
    <property type="entry name" value="glmS"/>
    <property type="match status" value="1"/>
</dbReference>
<dbReference type="NCBIfam" id="NF001484">
    <property type="entry name" value="PRK00331.1"/>
    <property type="match status" value="1"/>
</dbReference>
<dbReference type="PANTHER" id="PTHR10937">
    <property type="entry name" value="GLUCOSAMINE--FRUCTOSE-6-PHOSPHATE AMINOTRANSFERASE, ISOMERIZING"/>
    <property type="match status" value="1"/>
</dbReference>
<dbReference type="PANTHER" id="PTHR10937:SF0">
    <property type="entry name" value="GLUTAMINE--FRUCTOSE-6-PHOSPHATE TRANSAMINASE (ISOMERIZING)"/>
    <property type="match status" value="1"/>
</dbReference>
<dbReference type="Pfam" id="PF13522">
    <property type="entry name" value="GATase_6"/>
    <property type="match status" value="1"/>
</dbReference>
<dbReference type="Pfam" id="PF01380">
    <property type="entry name" value="SIS"/>
    <property type="match status" value="2"/>
</dbReference>
<dbReference type="SUPFAM" id="SSF56235">
    <property type="entry name" value="N-terminal nucleophile aminohydrolases (Ntn hydrolases)"/>
    <property type="match status" value="1"/>
</dbReference>
<dbReference type="SUPFAM" id="SSF53697">
    <property type="entry name" value="SIS domain"/>
    <property type="match status" value="1"/>
</dbReference>
<dbReference type="PROSITE" id="PS51278">
    <property type="entry name" value="GATASE_TYPE_2"/>
    <property type="match status" value="1"/>
</dbReference>
<dbReference type="PROSITE" id="PS51464">
    <property type="entry name" value="SIS"/>
    <property type="match status" value="2"/>
</dbReference>
<proteinExistence type="inferred from homology"/>